<comment type="function">
    <text evidence="2 5">Putative acetyltransferase; part of the gene cluster that mediates the biosynthesis of butenolide, a mycotoxin that shows antibiotic activity but does not seem to play a major role in the spread of head blight in wheat (PubMed:17175185). Butenolide is derived from glutamic acid via a 4-acetamido-2-butenoic acid intermediate (Probable). The predicted function of the NADH:flavin oxidoreductase FG08077, the cytochrome P450 monooxygenase FG08079, the decarboxylase FG08083, and the putative acetyltransferase FG08082 are consistent with this pathway, however, the respective activities of the butelonide biosynthesis cluster enzymes have still to be experimentally determined (Probable).</text>
</comment>
<comment type="pathway">
    <text evidence="5">Mycotoxin biosynthesis.</text>
</comment>
<comment type="induction">
    <text evidence="2">Highly expressed under trichothecene-producing conditions.</text>
</comment>
<comment type="similarity">
    <text evidence="4">Belongs to the acetyltransferase family.</text>
</comment>
<proteinExistence type="evidence at transcript level"/>
<sequence>MINITKPQNWTRGDYLVSTDPALLQVDAINAALSSDMVWWAGDLPADALWDALRSSICFGLYRKRSSEMNGTGPTVEYKIEEWEQVGLVRMITDGVTFGYLTDVYILPEHQGGGRGRWMLQILNEALQGWPHLRRVMLLTTDKMHLFGKNLGMKDYREFDGMKGVSIAMVEGPGAQH</sequence>
<organism>
    <name type="scientific">Gibberella zeae (strain ATCC MYA-4620 / CBS 123657 / FGSC 9075 / NRRL 31084 / PH-1)</name>
    <name type="common">Wheat head blight fungus</name>
    <name type="synonym">Fusarium graminearum</name>
    <dbReference type="NCBI Taxonomy" id="229533"/>
    <lineage>
        <taxon>Eukaryota</taxon>
        <taxon>Fungi</taxon>
        <taxon>Dikarya</taxon>
        <taxon>Ascomycota</taxon>
        <taxon>Pezizomycotina</taxon>
        <taxon>Sordariomycetes</taxon>
        <taxon>Hypocreomycetidae</taxon>
        <taxon>Hypocreales</taxon>
        <taxon>Nectriaceae</taxon>
        <taxon>Fusarium</taxon>
    </lineage>
</organism>
<reference key="1">
    <citation type="journal article" date="2007" name="Science">
        <title>The Fusarium graminearum genome reveals a link between localized polymorphism and pathogen specialization.</title>
        <authorList>
            <person name="Cuomo C.A."/>
            <person name="Gueldener U."/>
            <person name="Xu J.-R."/>
            <person name="Trail F."/>
            <person name="Turgeon B.G."/>
            <person name="Di Pietro A."/>
            <person name="Walton J.D."/>
            <person name="Ma L.-J."/>
            <person name="Baker S.E."/>
            <person name="Rep M."/>
            <person name="Adam G."/>
            <person name="Antoniw J."/>
            <person name="Baldwin T."/>
            <person name="Calvo S.E."/>
            <person name="Chang Y.-L."/>
            <person name="DeCaprio D."/>
            <person name="Gale L.R."/>
            <person name="Gnerre S."/>
            <person name="Goswami R.S."/>
            <person name="Hammond-Kosack K."/>
            <person name="Harris L.J."/>
            <person name="Hilburn K."/>
            <person name="Kennell J.C."/>
            <person name="Kroken S."/>
            <person name="Magnuson J.K."/>
            <person name="Mannhaupt G."/>
            <person name="Mauceli E.W."/>
            <person name="Mewes H.-W."/>
            <person name="Mitterbauer R."/>
            <person name="Muehlbauer G."/>
            <person name="Muensterkoetter M."/>
            <person name="Nelson D."/>
            <person name="O'Donnell K."/>
            <person name="Ouellet T."/>
            <person name="Qi W."/>
            <person name="Quesneville H."/>
            <person name="Roncero M.I.G."/>
            <person name="Seong K.-Y."/>
            <person name="Tetko I.V."/>
            <person name="Urban M."/>
            <person name="Waalwijk C."/>
            <person name="Ward T.J."/>
            <person name="Yao J."/>
            <person name="Birren B.W."/>
            <person name="Kistler H.C."/>
        </authorList>
    </citation>
    <scope>NUCLEOTIDE SEQUENCE [LARGE SCALE GENOMIC DNA]</scope>
    <source>
        <strain>ATCC MYA-4620 / CBS 123657 / FGSC 9075 / NRRL 31084 / PH-1</strain>
    </source>
</reference>
<reference key="2">
    <citation type="journal article" date="2010" name="Nature">
        <title>Comparative genomics reveals mobile pathogenicity chromosomes in Fusarium.</title>
        <authorList>
            <person name="Ma L.-J."/>
            <person name="van der Does H.C."/>
            <person name="Borkovich K.A."/>
            <person name="Coleman J.J."/>
            <person name="Daboussi M.-J."/>
            <person name="Di Pietro A."/>
            <person name="Dufresne M."/>
            <person name="Freitag M."/>
            <person name="Grabherr M."/>
            <person name="Henrissat B."/>
            <person name="Houterman P.M."/>
            <person name="Kang S."/>
            <person name="Shim W.-B."/>
            <person name="Woloshuk C."/>
            <person name="Xie X."/>
            <person name="Xu J.-R."/>
            <person name="Antoniw J."/>
            <person name="Baker S.E."/>
            <person name="Bluhm B.H."/>
            <person name="Breakspear A."/>
            <person name="Brown D.W."/>
            <person name="Butchko R.A.E."/>
            <person name="Chapman S."/>
            <person name="Coulson R."/>
            <person name="Coutinho P.M."/>
            <person name="Danchin E.G.J."/>
            <person name="Diener A."/>
            <person name="Gale L.R."/>
            <person name="Gardiner D.M."/>
            <person name="Goff S."/>
            <person name="Hammond-Kosack K.E."/>
            <person name="Hilburn K."/>
            <person name="Hua-Van A."/>
            <person name="Jonkers W."/>
            <person name="Kazan K."/>
            <person name="Kodira C.D."/>
            <person name="Koehrsen M."/>
            <person name="Kumar L."/>
            <person name="Lee Y.-H."/>
            <person name="Li L."/>
            <person name="Manners J.M."/>
            <person name="Miranda-Saavedra D."/>
            <person name="Mukherjee M."/>
            <person name="Park G."/>
            <person name="Park J."/>
            <person name="Park S.-Y."/>
            <person name="Proctor R.H."/>
            <person name="Regev A."/>
            <person name="Ruiz-Roldan M.C."/>
            <person name="Sain D."/>
            <person name="Sakthikumar S."/>
            <person name="Sykes S."/>
            <person name="Schwartz D.C."/>
            <person name="Turgeon B.G."/>
            <person name="Wapinski I."/>
            <person name="Yoder O."/>
            <person name="Young S."/>
            <person name="Zeng Q."/>
            <person name="Zhou S."/>
            <person name="Galagan J."/>
            <person name="Cuomo C.A."/>
            <person name="Kistler H.C."/>
            <person name="Rep M."/>
        </authorList>
    </citation>
    <scope>GENOME REANNOTATION</scope>
    <source>
        <strain>ATCC MYA-4620 / CBS 123657 / FGSC 9075 / NRRL 31084 / PH-1</strain>
    </source>
</reference>
<reference key="3">
    <citation type="journal article" date="2015" name="BMC Genomics">
        <title>The completed genome sequence of the pathogenic ascomycete fungus Fusarium graminearum.</title>
        <authorList>
            <person name="King R."/>
            <person name="Urban M."/>
            <person name="Hammond-Kosack M.C.U."/>
            <person name="Hassani-Pak K."/>
            <person name="Hammond-Kosack K.E."/>
        </authorList>
    </citation>
    <scope>NUCLEOTIDE SEQUENCE [LARGE SCALE GENOMIC DNA]</scope>
    <source>
        <strain>ATCC MYA-4620 / CBS 123657 / FGSC 9075 / NRRL 31084 / PH-1</strain>
    </source>
</reference>
<reference key="4">
    <citation type="journal article" date="2007" name="Fungal Genet. Biol.">
        <title>A novel gene cluster in Fusarium graminearum contains a gene that contributes to butenolide synthesis.</title>
        <authorList>
            <person name="Harris L.J."/>
            <person name="Alexander N.J."/>
            <person name="Saparno A."/>
            <person name="Blackwell B."/>
            <person name="McCormick S.P."/>
            <person name="Desjardins A.E."/>
            <person name="Robert L.S."/>
            <person name="Tinker N."/>
            <person name="Hattori J."/>
            <person name="Piche C."/>
            <person name="Schernthaner J.P."/>
            <person name="Watson R."/>
            <person name="Ouellet T."/>
        </authorList>
    </citation>
    <scope>FUNCTION</scope>
    <scope>INDUCTION</scope>
    <scope>PATHWAY</scope>
</reference>
<accession>I1RV22</accession>
<feature type="chain" id="PRO_0000450727" description="Putative acetyltransferase FG08082">
    <location>
        <begin position="1"/>
        <end position="177"/>
    </location>
</feature>
<feature type="domain" description="N-acetyltransferase" evidence="1">
    <location>
        <begin position="81"/>
        <end position="174"/>
    </location>
</feature>
<name>BUT82_GIBZE</name>
<keyword id="KW-0012">Acyltransferase</keyword>
<keyword id="KW-1185">Reference proteome</keyword>
<keyword id="KW-0808">Transferase</keyword>
<dbReference type="EC" id="2.3.1.-" evidence="1"/>
<dbReference type="EMBL" id="HG970333">
    <property type="protein sequence ID" value="CEF76339.1"/>
    <property type="molecule type" value="Genomic_DNA"/>
</dbReference>
<dbReference type="RefSeq" id="XP_011320740.1">
    <property type="nucleotide sequence ID" value="XM_011322438.1"/>
</dbReference>
<dbReference type="SMR" id="I1RV22"/>
<dbReference type="KEGG" id="fgr:FGSG_08082"/>
<dbReference type="VEuPathDB" id="FungiDB:FGRAMPH1_01G09073"/>
<dbReference type="eggNOG" id="ENOG502SYW6">
    <property type="taxonomic scope" value="Eukaryota"/>
</dbReference>
<dbReference type="HOGENOM" id="CLU_086503_2_0_1"/>
<dbReference type="InParanoid" id="I1RV22"/>
<dbReference type="OrthoDB" id="14954at110618"/>
<dbReference type="Proteomes" id="UP000070720">
    <property type="component" value="Chromosome 2"/>
</dbReference>
<dbReference type="GO" id="GO:0016747">
    <property type="term" value="F:acyltransferase activity, transferring groups other than amino-acyl groups"/>
    <property type="evidence" value="ECO:0007669"/>
    <property type="project" value="InterPro"/>
</dbReference>
<dbReference type="CDD" id="cd04301">
    <property type="entry name" value="NAT_SF"/>
    <property type="match status" value="1"/>
</dbReference>
<dbReference type="Gene3D" id="3.40.630.30">
    <property type="match status" value="1"/>
</dbReference>
<dbReference type="InterPro" id="IPR053144">
    <property type="entry name" value="Acetyltransferase_Butenolide"/>
</dbReference>
<dbReference type="InterPro" id="IPR016181">
    <property type="entry name" value="Acyl_CoA_acyltransferase"/>
</dbReference>
<dbReference type="InterPro" id="IPR000182">
    <property type="entry name" value="GNAT_dom"/>
</dbReference>
<dbReference type="PANTHER" id="PTHR43233">
    <property type="entry name" value="FAMILY N-ACETYLTRANSFERASE, PUTATIVE (AFU_ORTHOLOGUE AFUA_6G03350)-RELATED"/>
    <property type="match status" value="1"/>
</dbReference>
<dbReference type="PANTHER" id="PTHR43233:SF1">
    <property type="entry name" value="FAMILY N-ACETYLTRANSFERASE, PUTATIVE (AFU_ORTHOLOGUE AFUA_6G03350)-RELATED"/>
    <property type="match status" value="1"/>
</dbReference>
<dbReference type="Pfam" id="PF00583">
    <property type="entry name" value="Acetyltransf_1"/>
    <property type="match status" value="1"/>
</dbReference>
<dbReference type="SUPFAM" id="SSF55729">
    <property type="entry name" value="Acyl-CoA N-acyltransferases (Nat)"/>
    <property type="match status" value="1"/>
</dbReference>
<gene>
    <name type="ORF">FG08082</name>
    <name type="ORF">FGRAMPH1_01T09073</name>
</gene>
<protein>
    <recommendedName>
        <fullName evidence="3">Putative acetyltransferase FG08082</fullName>
        <ecNumber evidence="1">2.3.1.-</ecNumber>
    </recommendedName>
    <alternativeName>
        <fullName evidence="3">Butenolide biosynthesis cluster protein FG08082</fullName>
    </alternativeName>
</protein>
<evidence type="ECO:0000255" key="1">
    <source>
        <dbReference type="PROSITE-ProRule" id="PRU00532"/>
    </source>
</evidence>
<evidence type="ECO:0000269" key="2">
    <source>
    </source>
</evidence>
<evidence type="ECO:0000303" key="3">
    <source>
    </source>
</evidence>
<evidence type="ECO:0000305" key="4"/>
<evidence type="ECO:0000305" key="5">
    <source>
    </source>
</evidence>